<keyword id="KW-0028">Amino-acid biosynthesis</keyword>
<keyword id="KW-0963">Cytoplasm</keyword>
<keyword id="KW-0238">DNA-binding</keyword>
<keyword id="KW-0486">Methionine biosynthesis</keyword>
<keyword id="KW-0678">Repressor</keyword>
<keyword id="KW-0804">Transcription</keyword>
<keyword id="KW-0805">Transcription regulation</keyword>
<gene>
    <name evidence="1" type="primary">metJ</name>
    <name type="ordered locus">SPA3942</name>
</gene>
<reference key="1">
    <citation type="journal article" date="2004" name="Nat. Genet.">
        <title>Comparison of genome degradation in Paratyphi A and Typhi, human-restricted serovars of Salmonella enterica that cause typhoid.</title>
        <authorList>
            <person name="McClelland M."/>
            <person name="Sanderson K.E."/>
            <person name="Clifton S.W."/>
            <person name="Latreille P."/>
            <person name="Porwollik S."/>
            <person name="Sabo A."/>
            <person name="Meyer R."/>
            <person name="Bieri T."/>
            <person name="Ozersky P."/>
            <person name="McLellan M."/>
            <person name="Harkins C.R."/>
            <person name="Wang C."/>
            <person name="Nguyen C."/>
            <person name="Berghoff A."/>
            <person name="Elliott G."/>
            <person name="Kohlberg S."/>
            <person name="Strong C."/>
            <person name="Du F."/>
            <person name="Carter J."/>
            <person name="Kremizki C."/>
            <person name="Layman D."/>
            <person name="Leonard S."/>
            <person name="Sun H."/>
            <person name="Fulton L."/>
            <person name="Nash W."/>
            <person name="Miner T."/>
            <person name="Minx P."/>
            <person name="Delehaunty K."/>
            <person name="Fronick C."/>
            <person name="Magrini V."/>
            <person name="Nhan M."/>
            <person name="Warren W."/>
            <person name="Florea L."/>
            <person name="Spieth J."/>
            <person name="Wilson R.K."/>
        </authorList>
    </citation>
    <scope>NUCLEOTIDE SEQUENCE [LARGE SCALE GENOMIC DNA]</scope>
    <source>
        <strain>ATCC 9150 / SARB42</strain>
    </source>
</reference>
<evidence type="ECO:0000255" key="1">
    <source>
        <dbReference type="HAMAP-Rule" id="MF_00744"/>
    </source>
</evidence>
<organism>
    <name type="scientific">Salmonella paratyphi A (strain ATCC 9150 / SARB42)</name>
    <dbReference type="NCBI Taxonomy" id="295319"/>
    <lineage>
        <taxon>Bacteria</taxon>
        <taxon>Pseudomonadati</taxon>
        <taxon>Pseudomonadota</taxon>
        <taxon>Gammaproteobacteria</taxon>
        <taxon>Enterobacterales</taxon>
        <taxon>Enterobacteriaceae</taxon>
        <taxon>Salmonella</taxon>
    </lineage>
</organism>
<feature type="chain" id="PRO_1000046495" description="Met repressor">
    <location>
        <begin position="1"/>
        <end position="105"/>
    </location>
</feature>
<comment type="function">
    <text evidence="1">This regulatory protein, when combined with SAM (S-adenosylmethionine) represses the expression of the methionine regulon and of enzymes involved in SAM synthesis.</text>
</comment>
<comment type="subunit">
    <text evidence="1">Homodimer.</text>
</comment>
<comment type="subcellular location">
    <subcellularLocation>
        <location evidence="1">Cytoplasm</location>
    </subcellularLocation>
</comment>
<comment type="domain">
    <text>Does not bind DNA by a helix-turn-helix motif.</text>
</comment>
<comment type="similarity">
    <text evidence="1">Belongs to the MetJ family.</text>
</comment>
<sequence>MAEWSGEYISPYAEHGKKSEQVKKITVSIPLKVLKILTDERTRRQVNNLRHATNSELLCEAFLHAFTGQPLPDDADLRKERSDEIPEAAKEIMREMGIDPETWEY</sequence>
<name>METJ_SALPA</name>
<dbReference type="EMBL" id="CP000026">
    <property type="protein sequence ID" value="AAV79706.1"/>
    <property type="molecule type" value="Genomic_DNA"/>
</dbReference>
<dbReference type="RefSeq" id="WP_000852811.1">
    <property type="nucleotide sequence ID" value="NC_006511.1"/>
</dbReference>
<dbReference type="SMR" id="Q5PK48"/>
<dbReference type="GeneID" id="66758351"/>
<dbReference type="KEGG" id="spt:SPA3942"/>
<dbReference type="HOGENOM" id="CLU_142318_0_0_6"/>
<dbReference type="Proteomes" id="UP000008185">
    <property type="component" value="Chromosome"/>
</dbReference>
<dbReference type="GO" id="GO:0005737">
    <property type="term" value="C:cytoplasm"/>
    <property type="evidence" value="ECO:0007669"/>
    <property type="project" value="UniProtKB-SubCell"/>
</dbReference>
<dbReference type="GO" id="GO:0003677">
    <property type="term" value="F:DNA binding"/>
    <property type="evidence" value="ECO:0007669"/>
    <property type="project" value="UniProtKB-KW"/>
</dbReference>
<dbReference type="GO" id="GO:0003700">
    <property type="term" value="F:DNA-binding transcription factor activity"/>
    <property type="evidence" value="ECO:0007669"/>
    <property type="project" value="InterPro"/>
</dbReference>
<dbReference type="GO" id="GO:0009086">
    <property type="term" value="P:methionine biosynthetic process"/>
    <property type="evidence" value="ECO:0007669"/>
    <property type="project" value="UniProtKB-UniRule"/>
</dbReference>
<dbReference type="GO" id="GO:0045892">
    <property type="term" value="P:negative regulation of DNA-templated transcription"/>
    <property type="evidence" value="ECO:0007669"/>
    <property type="project" value="UniProtKB-UniRule"/>
</dbReference>
<dbReference type="CDD" id="cd00490">
    <property type="entry name" value="Met_repressor_MetJ"/>
    <property type="match status" value="1"/>
</dbReference>
<dbReference type="FunFam" id="1.10.140.10:FF:000001">
    <property type="entry name" value="Met repressor"/>
    <property type="match status" value="1"/>
</dbReference>
<dbReference type="Gene3D" id="1.10.140.10">
    <property type="entry name" value="MET Apo-Repressor, subunit A"/>
    <property type="match status" value="1"/>
</dbReference>
<dbReference type="HAMAP" id="MF_00744">
    <property type="entry name" value="MetJ"/>
    <property type="match status" value="1"/>
</dbReference>
<dbReference type="InterPro" id="IPR002084">
    <property type="entry name" value="Met_repressor_MetJ"/>
</dbReference>
<dbReference type="InterPro" id="IPR023453">
    <property type="entry name" value="Met_repressor_MetJ_dom_sf"/>
</dbReference>
<dbReference type="InterPro" id="IPR010985">
    <property type="entry name" value="Ribbon_hlx_hlx"/>
</dbReference>
<dbReference type="NCBIfam" id="NF003622">
    <property type="entry name" value="PRK05264.1"/>
    <property type="match status" value="1"/>
</dbReference>
<dbReference type="Pfam" id="PF01340">
    <property type="entry name" value="MetJ"/>
    <property type="match status" value="1"/>
</dbReference>
<dbReference type="SUPFAM" id="SSF47598">
    <property type="entry name" value="Ribbon-helix-helix"/>
    <property type="match status" value="1"/>
</dbReference>
<proteinExistence type="inferred from homology"/>
<accession>Q5PK48</accession>
<protein>
    <recommendedName>
        <fullName evidence="1">Met repressor</fullName>
    </recommendedName>
    <alternativeName>
        <fullName evidence="1">Met regulon regulatory protein MetJ</fullName>
    </alternativeName>
</protein>